<accession>P48522</accession>
<reference key="1">
    <citation type="journal article" date="1995" name="FEBS Lett.">
        <title>Cinnamate 4-hydroxylase from Catharanthus roseus, and a strategy for the functional expression of plant cytochrome P450 proteins as translational fusions with P450 reductase in Escherichia coli.</title>
        <authorList>
            <person name="Hotze M."/>
            <person name="Schroeder G."/>
            <person name="Schroeder J."/>
        </authorList>
    </citation>
    <scope>NUCLEOTIDE SEQUENCE [MRNA]</scope>
</reference>
<organism>
    <name type="scientific">Catharanthus roseus</name>
    <name type="common">Madagascar periwinkle</name>
    <name type="synonym">Vinca rosea</name>
    <dbReference type="NCBI Taxonomy" id="4058"/>
    <lineage>
        <taxon>Eukaryota</taxon>
        <taxon>Viridiplantae</taxon>
        <taxon>Streptophyta</taxon>
        <taxon>Embryophyta</taxon>
        <taxon>Tracheophyta</taxon>
        <taxon>Spermatophyta</taxon>
        <taxon>Magnoliopsida</taxon>
        <taxon>eudicotyledons</taxon>
        <taxon>Gunneridae</taxon>
        <taxon>Pentapetalae</taxon>
        <taxon>asterids</taxon>
        <taxon>lamiids</taxon>
        <taxon>Gentianales</taxon>
        <taxon>Apocynaceae</taxon>
        <taxon>Rauvolfioideae</taxon>
        <taxon>Vinceae</taxon>
        <taxon>Catharanthinae</taxon>
        <taxon>Catharanthus</taxon>
    </lineage>
</organism>
<comment type="function">
    <text evidence="1">Catalyzes the first oxidative step of the phenylpropanoid pathway in higher plants by transforming trans-cinnamate into p-coumarate (By similarity). The compounds formed by this pathway are essential components for lignification, pollination, and defense against ultraviolet light, predators and pathogens (By similarity).</text>
</comment>
<comment type="catalytic activity">
    <reaction evidence="1">
        <text>(E)-cinnamate + reduced [NADPH--hemoprotein reductase] + O2 = (E)-4-coumarate + oxidized [NADPH--hemoprotein reductase] + H2O + H(+)</text>
        <dbReference type="Rhea" id="RHEA:10608"/>
        <dbReference type="Rhea" id="RHEA-COMP:11964"/>
        <dbReference type="Rhea" id="RHEA-COMP:11965"/>
        <dbReference type="ChEBI" id="CHEBI:12876"/>
        <dbReference type="ChEBI" id="CHEBI:15377"/>
        <dbReference type="ChEBI" id="CHEBI:15378"/>
        <dbReference type="ChEBI" id="CHEBI:15379"/>
        <dbReference type="ChEBI" id="CHEBI:15669"/>
        <dbReference type="ChEBI" id="CHEBI:57618"/>
        <dbReference type="ChEBI" id="CHEBI:58210"/>
        <dbReference type="EC" id="1.14.14.91"/>
    </reaction>
</comment>
<comment type="cofactor">
    <cofactor evidence="2">
        <name>heme</name>
        <dbReference type="ChEBI" id="CHEBI:30413"/>
    </cofactor>
</comment>
<comment type="pathway">
    <text evidence="4">Phenylpropanoid metabolism; trans-4-coumarate biosynthesis; trans-4-coumarate from trans-cinnamate: step 1/1.</text>
</comment>
<comment type="subcellular location">
    <subcellularLocation>
        <location evidence="3">Membrane</location>
        <topology evidence="3">Single-pass membrane protein</topology>
    </subcellularLocation>
</comment>
<comment type="similarity">
    <text evidence="4">Belongs to the cytochrome P450 family.</text>
</comment>
<proteinExistence type="evidence at transcript level"/>
<keyword id="KW-0349">Heme</keyword>
<keyword id="KW-0408">Iron</keyword>
<keyword id="KW-0472">Membrane</keyword>
<keyword id="KW-0479">Metal-binding</keyword>
<keyword id="KW-0503">Monooxygenase</keyword>
<keyword id="KW-0560">Oxidoreductase</keyword>
<keyword id="KW-0812">Transmembrane</keyword>
<keyword id="KW-1133">Transmembrane helix</keyword>
<dbReference type="EC" id="1.14.14.91" evidence="1"/>
<dbReference type="EMBL" id="Z32563">
    <property type="protein sequence ID" value="CAA83552.1"/>
    <property type="molecule type" value="mRNA"/>
</dbReference>
<dbReference type="PIR" id="S68204">
    <property type="entry name" value="S68204"/>
</dbReference>
<dbReference type="SMR" id="P48522"/>
<dbReference type="UniPathway" id="UPA00825">
    <property type="reaction ID" value="UER00789"/>
</dbReference>
<dbReference type="GO" id="GO:0016020">
    <property type="term" value="C:membrane"/>
    <property type="evidence" value="ECO:0007669"/>
    <property type="project" value="UniProtKB-SubCell"/>
</dbReference>
<dbReference type="GO" id="GO:0020037">
    <property type="term" value="F:heme binding"/>
    <property type="evidence" value="ECO:0007669"/>
    <property type="project" value="InterPro"/>
</dbReference>
<dbReference type="GO" id="GO:0005506">
    <property type="term" value="F:iron ion binding"/>
    <property type="evidence" value="ECO:0007669"/>
    <property type="project" value="InterPro"/>
</dbReference>
<dbReference type="GO" id="GO:0016710">
    <property type="term" value="F:trans-cinnamate 4-monooxygenase activity"/>
    <property type="evidence" value="ECO:0007669"/>
    <property type="project" value="UniProtKB-EC"/>
</dbReference>
<dbReference type="GO" id="GO:0009808">
    <property type="term" value="P:lignin metabolic process"/>
    <property type="evidence" value="ECO:0007669"/>
    <property type="project" value="TreeGrafter"/>
</dbReference>
<dbReference type="CDD" id="cd11074">
    <property type="entry name" value="CYP73"/>
    <property type="match status" value="1"/>
</dbReference>
<dbReference type="FunFam" id="1.10.630.10:FF:000013">
    <property type="entry name" value="Trans-cinnamate 4-monooxygenase"/>
    <property type="match status" value="1"/>
</dbReference>
<dbReference type="Gene3D" id="1.10.630.10">
    <property type="entry name" value="Cytochrome P450"/>
    <property type="match status" value="1"/>
</dbReference>
<dbReference type="InterPro" id="IPR001128">
    <property type="entry name" value="Cyt_P450"/>
</dbReference>
<dbReference type="InterPro" id="IPR017972">
    <property type="entry name" value="Cyt_P450_CS"/>
</dbReference>
<dbReference type="InterPro" id="IPR002401">
    <property type="entry name" value="Cyt_P450_E_grp-I"/>
</dbReference>
<dbReference type="InterPro" id="IPR036396">
    <property type="entry name" value="Cyt_P450_sf"/>
</dbReference>
<dbReference type="PANTHER" id="PTHR47948">
    <property type="entry name" value="TRANS-CINNAMATE 4-MONOOXYGENASE"/>
    <property type="match status" value="1"/>
</dbReference>
<dbReference type="PANTHER" id="PTHR47948:SF4">
    <property type="entry name" value="TRANS-CINNAMATE 4-MONOOXYGENASE"/>
    <property type="match status" value="1"/>
</dbReference>
<dbReference type="Pfam" id="PF00067">
    <property type="entry name" value="p450"/>
    <property type="match status" value="1"/>
</dbReference>
<dbReference type="PRINTS" id="PR00463">
    <property type="entry name" value="EP450I"/>
</dbReference>
<dbReference type="PRINTS" id="PR00385">
    <property type="entry name" value="P450"/>
</dbReference>
<dbReference type="SUPFAM" id="SSF48264">
    <property type="entry name" value="Cytochrome P450"/>
    <property type="match status" value="1"/>
</dbReference>
<dbReference type="PROSITE" id="PS00086">
    <property type="entry name" value="CYTOCHROME_P450"/>
    <property type="match status" value="1"/>
</dbReference>
<sequence length="505" mass="58280">MDLLLLEKTLLGLFAAIIVASIVSKLRGKKFKLPPGPIPVPVFGNWLQVGDDLNHRNLSDYAKKFGEIFLLRMGQRNLVVVSSPELAKEVLHTQGVEFGSRTRNVVFDIFTGKGQDMVFTVYGEHWRKMRRIMTVPFFTNKVVQQYRYGWEEEAARVVEDVKKNPESATNGIVLRRRLQLMMYNNMYRIMFDRRFESEDDPLFVKLKALNGERSRLAQGFEYNYGDFIPILRPFLRGYLRICKEVKERRLQLFKDYFVDERKKFGSTKSMDNNSLKCAIDHILEAQQKGEINEDNVLYIVENINVAAIETTLWSIEWGIAELVNHPEIQKKLRDELETVLGPGVQITEPDTYKLPYLQAVIKETLRLRMAIPLFLPHMNLHDAKLGGYDIPAESKILVNAWFLANNPEHWKKPEEFRPERFLEEESKVEANGNDFRYLPFGVGRRSCPGIILALPILGITIGRLVQNFELLPPPGKSKIDTSEKGGQFSLHILKHSTIVLKPRTF</sequence>
<feature type="chain" id="PRO_0000052243" description="Trans-cinnamate 4-monooxygenase">
    <location>
        <begin position="1"/>
        <end position="505"/>
    </location>
</feature>
<feature type="transmembrane region" description="Helical" evidence="3">
    <location>
        <begin position="3"/>
        <end position="23"/>
    </location>
</feature>
<feature type="binding site" evidence="2">
    <location>
        <begin position="213"/>
        <end position="218"/>
    </location>
    <ligand>
        <name>(E)-cinnamate</name>
        <dbReference type="ChEBI" id="CHEBI:15669"/>
    </ligand>
</feature>
<feature type="binding site" evidence="2">
    <location>
        <position position="306"/>
    </location>
    <ligand>
        <name>(E)-cinnamate</name>
        <dbReference type="ChEBI" id="CHEBI:15669"/>
    </ligand>
</feature>
<feature type="binding site" description="axial binding residue" evidence="2">
    <location>
        <position position="447"/>
    </location>
    <ligand>
        <name>heme</name>
        <dbReference type="ChEBI" id="CHEBI:30413"/>
    </ligand>
    <ligandPart>
        <name>Fe</name>
        <dbReference type="ChEBI" id="CHEBI:18248"/>
    </ligandPart>
</feature>
<evidence type="ECO:0000250" key="1">
    <source>
        <dbReference type="UniProtKB" id="Q04468"/>
    </source>
</evidence>
<evidence type="ECO:0000250" key="2">
    <source>
        <dbReference type="UniProtKB" id="Q94IP1"/>
    </source>
</evidence>
<evidence type="ECO:0000255" key="3"/>
<evidence type="ECO:0000305" key="4"/>
<name>TCMO_CATRO</name>
<gene>
    <name type="primary">CYP73A4</name>
</gene>
<protein>
    <recommendedName>
        <fullName>Trans-cinnamate 4-monooxygenase</fullName>
        <ecNumber evidence="1">1.14.14.91</ecNumber>
    </recommendedName>
    <alternativeName>
        <fullName>Cinnamic acid 4-hydroxylase</fullName>
        <shortName>C4H</shortName>
        <shortName>CA4H</shortName>
    </alternativeName>
    <alternativeName>
        <fullName>Cytochrome P450 73</fullName>
    </alternativeName>
    <alternativeName>
        <fullName>Cytochrome P450C4H</fullName>
    </alternativeName>
</protein>